<protein>
    <recommendedName>
        <fullName evidence="1">tRNA uridine 5-carboxymethylaminomethyl modification enzyme MnmG</fullName>
    </recommendedName>
    <alternativeName>
        <fullName evidence="1">Glucose-inhibited division protein A</fullName>
    </alternativeName>
</protein>
<accession>Q6F9Q1</accession>
<comment type="function">
    <text evidence="1">NAD-binding protein involved in the addition of a carboxymethylaminomethyl (cmnm) group at the wobble position (U34) of certain tRNAs, forming tRNA-cmnm(5)s(2)U34.</text>
</comment>
<comment type="cofactor">
    <cofactor evidence="1">
        <name>FAD</name>
        <dbReference type="ChEBI" id="CHEBI:57692"/>
    </cofactor>
</comment>
<comment type="subunit">
    <text evidence="1">Homodimer. Heterotetramer of two MnmE and two MnmG subunits.</text>
</comment>
<comment type="subcellular location">
    <subcellularLocation>
        <location evidence="1">Cytoplasm</location>
    </subcellularLocation>
</comment>
<comment type="similarity">
    <text evidence="1">Belongs to the MnmG family.</text>
</comment>
<keyword id="KW-0963">Cytoplasm</keyword>
<keyword id="KW-0274">FAD</keyword>
<keyword id="KW-0285">Flavoprotein</keyword>
<keyword id="KW-0520">NAD</keyword>
<keyword id="KW-0819">tRNA processing</keyword>
<feature type="chain" id="PRO_0000117042" description="tRNA uridine 5-carboxymethylaminomethyl modification enzyme MnmG">
    <location>
        <begin position="1"/>
        <end position="626"/>
    </location>
</feature>
<feature type="binding site" evidence="1">
    <location>
        <begin position="13"/>
        <end position="18"/>
    </location>
    <ligand>
        <name>FAD</name>
        <dbReference type="ChEBI" id="CHEBI:57692"/>
    </ligand>
</feature>
<feature type="binding site" evidence="1">
    <location>
        <begin position="273"/>
        <end position="287"/>
    </location>
    <ligand>
        <name>NAD(+)</name>
        <dbReference type="ChEBI" id="CHEBI:57540"/>
    </ligand>
</feature>
<name>MNMG_ACIAD</name>
<evidence type="ECO:0000255" key="1">
    <source>
        <dbReference type="HAMAP-Rule" id="MF_00129"/>
    </source>
</evidence>
<reference key="1">
    <citation type="journal article" date="2004" name="Nucleic Acids Res.">
        <title>Unique features revealed by the genome sequence of Acinetobacter sp. ADP1, a versatile and naturally transformation competent bacterium.</title>
        <authorList>
            <person name="Barbe V."/>
            <person name="Vallenet D."/>
            <person name="Fonknechten N."/>
            <person name="Kreimeyer A."/>
            <person name="Oztas S."/>
            <person name="Labarre L."/>
            <person name="Cruveiller S."/>
            <person name="Robert C."/>
            <person name="Duprat S."/>
            <person name="Wincker P."/>
            <person name="Ornston L.N."/>
            <person name="Weissenbach J."/>
            <person name="Marliere P."/>
            <person name="Cohen G.N."/>
            <person name="Medigue C."/>
        </authorList>
    </citation>
    <scope>NUCLEOTIDE SEQUENCE [LARGE SCALE GENOMIC DNA]</scope>
    <source>
        <strain>ATCC 33305 / BD413 / ADP1</strain>
    </source>
</reference>
<organism>
    <name type="scientific">Acinetobacter baylyi (strain ATCC 33305 / BD413 / ADP1)</name>
    <dbReference type="NCBI Taxonomy" id="62977"/>
    <lineage>
        <taxon>Bacteria</taxon>
        <taxon>Pseudomonadati</taxon>
        <taxon>Pseudomonadota</taxon>
        <taxon>Gammaproteobacteria</taxon>
        <taxon>Moraxellales</taxon>
        <taxon>Moraxellaceae</taxon>
        <taxon>Acinetobacter</taxon>
    </lineage>
</organism>
<gene>
    <name evidence="1" type="primary">mnmG</name>
    <name evidence="1" type="synonym">gidA</name>
    <name type="ordered locus">ACIAD2440</name>
</gene>
<dbReference type="EMBL" id="CR543861">
    <property type="protein sequence ID" value="CAG69213.1"/>
    <property type="molecule type" value="Genomic_DNA"/>
</dbReference>
<dbReference type="RefSeq" id="WP_004928408.1">
    <property type="nucleotide sequence ID" value="NC_005966.1"/>
</dbReference>
<dbReference type="SMR" id="Q6F9Q1"/>
<dbReference type="STRING" id="202950.GCA_001485005_01553"/>
<dbReference type="GeneID" id="45234749"/>
<dbReference type="KEGG" id="aci:ACIAD2440"/>
<dbReference type="eggNOG" id="COG0445">
    <property type="taxonomic scope" value="Bacteria"/>
</dbReference>
<dbReference type="HOGENOM" id="CLU_007831_2_2_6"/>
<dbReference type="OrthoDB" id="9815560at2"/>
<dbReference type="BioCyc" id="ASP62977:ACIAD_RS11160-MONOMER"/>
<dbReference type="Proteomes" id="UP000000430">
    <property type="component" value="Chromosome"/>
</dbReference>
<dbReference type="GO" id="GO:0005829">
    <property type="term" value="C:cytosol"/>
    <property type="evidence" value="ECO:0007669"/>
    <property type="project" value="TreeGrafter"/>
</dbReference>
<dbReference type="GO" id="GO:0050660">
    <property type="term" value="F:flavin adenine dinucleotide binding"/>
    <property type="evidence" value="ECO:0007669"/>
    <property type="project" value="UniProtKB-UniRule"/>
</dbReference>
<dbReference type="GO" id="GO:0030488">
    <property type="term" value="P:tRNA methylation"/>
    <property type="evidence" value="ECO:0007669"/>
    <property type="project" value="TreeGrafter"/>
</dbReference>
<dbReference type="GO" id="GO:0002098">
    <property type="term" value="P:tRNA wobble uridine modification"/>
    <property type="evidence" value="ECO:0007669"/>
    <property type="project" value="InterPro"/>
</dbReference>
<dbReference type="FunFam" id="1.10.10.1800:FF:000001">
    <property type="entry name" value="tRNA uridine 5-carboxymethylaminomethyl modification enzyme MnmG"/>
    <property type="match status" value="1"/>
</dbReference>
<dbReference type="FunFam" id="1.10.150.570:FF:000001">
    <property type="entry name" value="tRNA uridine 5-carboxymethylaminomethyl modification enzyme MnmG"/>
    <property type="match status" value="1"/>
</dbReference>
<dbReference type="FunFam" id="3.50.50.60:FF:000002">
    <property type="entry name" value="tRNA uridine 5-carboxymethylaminomethyl modification enzyme MnmG"/>
    <property type="match status" value="1"/>
</dbReference>
<dbReference type="FunFam" id="3.50.50.60:FF:000010">
    <property type="entry name" value="tRNA uridine 5-carboxymethylaminomethyl modification enzyme MnmG"/>
    <property type="match status" value="1"/>
</dbReference>
<dbReference type="Gene3D" id="3.50.50.60">
    <property type="entry name" value="FAD/NAD(P)-binding domain"/>
    <property type="match status" value="2"/>
</dbReference>
<dbReference type="Gene3D" id="1.10.150.570">
    <property type="entry name" value="GidA associated domain, C-terminal subdomain"/>
    <property type="match status" value="1"/>
</dbReference>
<dbReference type="Gene3D" id="1.10.10.1800">
    <property type="entry name" value="tRNA uridine 5-carboxymethylaminomethyl modification enzyme MnmG/GidA"/>
    <property type="match status" value="1"/>
</dbReference>
<dbReference type="HAMAP" id="MF_00129">
    <property type="entry name" value="MnmG_GidA"/>
    <property type="match status" value="1"/>
</dbReference>
<dbReference type="InterPro" id="IPR036188">
    <property type="entry name" value="FAD/NAD-bd_sf"/>
</dbReference>
<dbReference type="InterPro" id="IPR049312">
    <property type="entry name" value="GIDA_C_N"/>
</dbReference>
<dbReference type="InterPro" id="IPR004416">
    <property type="entry name" value="MnmG"/>
</dbReference>
<dbReference type="InterPro" id="IPR002218">
    <property type="entry name" value="MnmG-rel"/>
</dbReference>
<dbReference type="InterPro" id="IPR020595">
    <property type="entry name" value="MnmG-rel_CS"/>
</dbReference>
<dbReference type="InterPro" id="IPR026904">
    <property type="entry name" value="MnmG_C"/>
</dbReference>
<dbReference type="InterPro" id="IPR047001">
    <property type="entry name" value="MnmG_C_subdom"/>
</dbReference>
<dbReference type="InterPro" id="IPR044920">
    <property type="entry name" value="MnmG_C_subdom_sf"/>
</dbReference>
<dbReference type="InterPro" id="IPR040131">
    <property type="entry name" value="MnmG_N"/>
</dbReference>
<dbReference type="NCBIfam" id="TIGR00136">
    <property type="entry name" value="mnmG_gidA"/>
    <property type="match status" value="1"/>
</dbReference>
<dbReference type="PANTHER" id="PTHR11806">
    <property type="entry name" value="GLUCOSE INHIBITED DIVISION PROTEIN A"/>
    <property type="match status" value="1"/>
</dbReference>
<dbReference type="PANTHER" id="PTHR11806:SF0">
    <property type="entry name" value="PROTEIN MTO1 HOMOLOG, MITOCHONDRIAL"/>
    <property type="match status" value="1"/>
</dbReference>
<dbReference type="Pfam" id="PF01134">
    <property type="entry name" value="GIDA"/>
    <property type="match status" value="1"/>
</dbReference>
<dbReference type="Pfam" id="PF21680">
    <property type="entry name" value="GIDA_C_1st"/>
    <property type="match status" value="1"/>
</dbReference>
<dbReference type="Pfam" id="PF13932">
    <property type="entry name" value="SAM_GIDA_C"/>
    <property type="match status" value="1"/>
</dbReference>
<dbReference type="SMART" id="SM01228">
    <property type="entry name" value="GIDA_assoc_3"/>
    <property type="match status" value="1"/>
</dbReference>
<dbReference type="SUPFAM" id="SSF51905">
    <property type="entry name" value="FAD/NAD(P)-binding domain"/>
    <property type="match status" value="1"/>
</dbReference>
<dbReference type="PROSITE" id="PS01280">
    <property type="entry name" value="GIDA_1"/>
    <property type="match status" value="1"/>
</dbReference>
<dbReference type="PROSITE" id="PS01281">
    <property type="entry name" value="GIDA_2"/>
    <property type="match status" value="1"/>
</dbReference>
<sequence>MHYPKVYDVIVIGGGHAGTEAALAAARMGRQTLLLTHNIETLGQMSCNPAIGGIGKSHLVREIDALGGAMALAADKGGIQFRILNSRKGAAVRATRAQADRVRYKAAIRHTLENQANLDIFQQAADDLIVEGDTVKGVVTQMGIRFDTKTVVLTTGTFLGGVIHIGLEKSSGGRAGDPPSIALSHRLRELNLPVGRLKTGTPPRIDARSVDFSVMTPQPGDFPSPVMSFMGDVSMHPEQVSCYITHTNEKTHDIIRGGLDRSPMYTGVIEGVGPRYCPSIEDKIHRFADKDSHQVFLEPEGLDTHELYPNGISTSLPFDVQFELVRSIRGMENAHILRPGYAIEYDYFNPQALKFTLETKAINNLYFAGQINGTTGYEEAGAQGLLAGLNAARRAWDQEQWTPKRDQAYMGVLVDDLITLGTKEPYRMFTSRAEYRLMLREDNADQRLTPVGREMGLVDDVRWAAYCEKMEAVETETARLAHLWAAPNNPMGKQFVEMTGADLSKECSAIDLLKRPNINFTQIAELTGSQVSTQVGDQIEIAVKYEGYINRQHEDVAQLKRLEETKIPADFDYDIVSGLSREITQKLKTVRPETLAQAHRIPGVTPAAVQLVMITIRKNAQTKKIA</sequence>
<proteinExistence type="inferred from homology"/>